<organism>
    <name type="scientific">Staphylococcus aureus (strain N315)</name>
    <dbReference type="NCBI Taxonomy" id="158879"/>
    <lineage>
        <taxon>Bacteria</taxon>
        <taxon>Bacillati</taxon>
        <taxon>Bacillota</taxon>
        <taxon>Bacilli</taxon>
        <taxon>Bacillales</taxon>
        <taxon>Staphylococcaceae</taxon>
        <taxon>Staphylococcus</taxon>
    </lineage>
</organism>
<proteinExistence type="evidence at protein level"/>
<evidence type="ECO:0000255" key="1">
    <source>
        <dbReference type="HAMAP-Rule" id="MF_00272"/>
    </source>
</evidence>
<evidence type="ECO:0000255" key="2">
    <source>
        <dbReference type="PROSITE-ProRule" id="PRU01066"/>
    </source>
</evidence>
<feature type="chain" id="PRO_0000166248" description="Glycine cleavage system H protein">
    <location>
        <begin position="1"/>
        <end position="126"/>
    </location>
</feature>
<feature type="domain" description="Lipoyl-binding" evidence="2">
    <location>
        <begin position="22"/>
        <end position="104"/>
    </location>
</feature>
<feature type="modified residue" description="N6-lipoyllysine" evidence="1">
    <location>
        <position position="63"/>
    </location>
</feature>
<dbReference type="EMBL" id="BA000018">
    <property type="protein sequence ID" value="BAB41997.1"/>
    <property type="molecule type" value="Genomic_DNA"/>
</dbReference>
<dbReference type="PIR" id="B89855">
    <property type="entry name" value="B89855"/>
</dbReference>
<dbReference type="RefSeq" id="WP_000290491.1">
    <property type="nucleotide sequence ID" value="NC_002745.2"/>
</dbReference>
<dbReference type="SMR" id="P64214"/>
<dbReference type="EnsemblBacteria" id="BAB41997">
    <property type="protein sequence ID" value="BAB41997"/>
    <property type="gene ID" value="BAB41997"/>
</dbReference>
<dbReference type="KEGG" id="sau:SA0760"/>
<dbReference type="HOGENOM" id="CLU_097408_2_0_9"/>
<dbReference type="GO" id="GO:0005829">
    <property type="term" value="C:cytosol"/>
    <property type="evidence" value="ECO:0007669"/>
    <property type="project" value="TreeGrafter"/>
</dbReference>
<dbReference type="GO" id="GO:0005960">
    <property type="term" value="C:glycine cleavage complex"/>
    <property type="evidence" value="ECO:0007669"/>
    <property type="project" value="InterPro"/>
</dbReference>
<dbReference type="GO" id="GO:0019464">
    <property type="term" value="P:glycine decarboxylation via glycine cleavage system"/>
    <property type="evidence" value="ECO:0007669"/>
    <property type="project" value="UniProtKB-UniRule"/>
</dbReference>
<dbReference type="CDD" id="cd06848">
    <property type="entry name" value="GCS_H"/>
    <property type="match status" value="1"/>
</dbReference>
<dbReference type="Gene3D" id="2.40.50.100">
    <property type="match status" value="1"/>
</dbReference>
<dbReference type="HAMAP" id="MF_00272">
    <property type="entry name" value="GcvH"/>
    <property type="match status" value="1"/>
</dbReference>
<dbReference type="InterPro" id="IPR003016">
    <property type="entry name" value="2-oxoA_DH_lipoyl-BS"/>
</dbReference>
<dbReference type="InterPro" id="IPR000089">
    <property type="entry name" value="Biotin_lipoyl"/>
</dbReference>
<dbReference type="InterPro" id="IPR002930">
    <property type="entry name" value="GCV_H"/>
</dbReference>
<dbReference type="InterPro" id="IPR033753">
    <property type="entry name" value="GCV_H/Fam206"/>
</dbReference>
<dbReference type="InterPro" id="IPR017453">
    <property type="entry name" value="GCV_H_sub"/>
</dbReference>
<dbReference type="InterPro" id="IPR011053">
    <property type="entry name" value="Single_hybrid_motif"/>
</dbReference>
<dbReference type="NCBIfam" id="TIGR00527">
    <property type="entry name" value="gcvH"/>
    <property type="match status" value="1"/>
</dbReference>
<dbReference type="NCBIfam" id="NF002270">
    <property type="entry name" value="PRK01202.1"/>
    <property type="match status" value="1"/>
</dbReference>
<dbReference type="PANTHER" id="PTHR11715">
    <property type="entry name" value="GLYCINE CLEAVAGE SYSTEM H PROTEIN"/>
    <property type="match status" value="1"/>
</dbReference>
<dbReference type="PANTHER" id="PTHR11715:SF3">
    <property type="entry name" value="GLYCINE CLEAVAGE SYSTEM H PROTEIN-RELATED"/>
    <property type="match status" value="1"/>
</dbReference>
<dbReference type="Pfam" id="PF01597">
    <property type="entry name" value="GCV_H"/>
    <property type="match status" value="1"/>
</dbReference>
<dbReference type="SUPFAM" id="SSF51230">
    <property type="entry name" value="Single hybrid motif"/>
    <property type="match status" value="1"/>
</dbReference>
<dbReference type="PROSITE" id="PS50968">
    <property type="entry name" value="BIOTINYL_LIPOYL"/>
    <property type="match status" value="1"/>
</dbReference>
<dbReference type="PROSITE" id="PS00189">
    <property type="entry name" value="LIPOYL"/>
    <property type="match status" value="1"/>
</dbReference>
<protein>
    <recommendedName>
        <fullName evidence="1">Glycine cleavage system H protein</fullName>
    </recommendedName>
    <alternativeName>
        <fullName evidence="1">Octanoyl/lipoyl carrier protein</fullName>
    </alternativeName>
</protein>
<name>GCSH_STAAN</name>
<comment type="function">
    <text evidence="1">The glycine cleavage system catalyzes the degradation of glycine. The H protein shuttles the methylamine group of glycine from the P protein to the T protein.</text>
</comment>
<comment type="function">
    <text evidence="1">Is also involved in protein lipoylation via its role as an octanoyl/lipoyl carrier protein intermediate.</text>
</comment>
<comment type="cofactor">
    <cofactor evidence="1">
        <name>(R)-lipoate</name>
        <dbReference type="ChEBI" id="CHEBI:83088"/>
    </cofactor>
    <text evidence="1">Binds 1 lipoyl cofactor covalently.</text>
</comment>
<comment type="subunit">
    <text evidence="1">The glycine cleavage system is composed of four proteins: P, T, L and H.</text>
</comment>
<comment type="similarity">
    <text evidence="1">Belongs to the GcvH family.</text>
</comment>
<accession>P64214</accession>
<accession>Q99VH3</accession>
<sequence length="126" mass="14081">MAVPNELKYSKEHEWVKVEGNVATIGITEYAQSELGDIVFVELPETDDEINEGDTFGSVESVKTVSELYAPISGKVVEVNEELEDSPEFVNESPYEKAWMVKVEISDESQLEALLTAEKYSEMIGE</sequence>
<keyword id="KW-0450">Lipoyl</keyword>
<reference key="1">
    <citation type="journal article" date="2001" name="Lancet">
        <title>Whole genome sequencing of meticillin-resistant Staphylococcus aureus.</title>
        <authorList>
            <person name="Kuroda M."/>
            <person name="Ohta T."/>
            <person name="Uchiyama I."/>
            <person name="Baba T."/>
            <person name="Yuzawa H."/>
            <person name="Kobayashi I."/>
            <person name="Cui L."/>
            <person name="Oguchi A."/>
            <person name="Aoki K."/>
            <person name="Nagai Y."/>
            <person name="Lian J.-Q."/>
            <person name="Ito T."/>
            <person name="Kanamori M."/>
            <person name="Matsumaru H."/>
            <person name="Maruyama A."/>
            <person name="Murakami H."/>
            <person name="Hosoyama A."/>
            <person name="Mizutani-Ui Y."/>
            <person name="Takahashi N.K."/>
            <person name="Sawano T."/>
            <person name="Inoue R."/>
            <person name="Kaito C."/>
            <person name="Sekimizu K."/>
            <person name="Hirakawa H."/>
            <person name="Kuhara S."/>
            <person name="Goto S."/>
            <person name="Yabuzaki J."/>
            <person name="Kanehisa M."/>
            <person name="Yamashita A."/>
            <person name="Oshima K."/>
            <person name="Furuya K."/>
            <person name="Yoshino C."/>
            <person name="Shiba T."/>
            <person name="Hattori M."/>
            <person name="Ogasawara N."/>
            <person name="Hayashi H."/>
            <person name="Hiramatsu K."/>
        </authorList>
    </citation>
    <scope>NUCLEOTIDE SEQUENCE [LARGE SCALE GENOMIC DNA]</scope>
    <source>
        <strain>N315</strain>
    </source>
</reference>
<reference key="2">
    <citation type="submission" date="2007-10" db="UniProtKB">
        <title>Shotgun proteomic analysis of total and membrane protein extracts of S. aureus strain N315.</title>
        <authorList>
            <person name="Vaezzadeh A.R."/>
            <person name="Deshusses J."/>
            <person name="Lescuyer P."/>
            <person name="Hochstrasser D.F."/>
        </authorList>
    </citation>
    <scope>IDENTIFICATION BY MASS SPECTROMETRY [LARGE SCALE ANALYSIS]</scope>
    <source>
        <strain>N315</strain>
    </source>
</reference>
<gene>
    <name evidence="1" type="primary">gcvH</name>
    <name type="ordered locus">SA0760</name>
</gene>